<organism>
    <name type="scientific">Arabidopsis thaliana</name>
    <name type="common">Mouse-ear cress</name>
    <dbReference type="NCBI Taxonomy" id="3702"/>
    <lineage>
        <taxon>Eukaryota</taxon>
        <taxon>Viridiplantae</taxon>
        <taxon>Streptophyta</taxon>
        <taxon>Embryophyta</taxon>
        <taxon>Tracheophyta</taxon>
        <taxon>Spermatophyta</taxon>
        <taxon>Magnoliopsida</taxon>
        <taxon>eudicotyledons</taxon>
        <taxon>Gunneridae</taxon>
        <taxon>Pentapetalae</taxon>
        <taxon>rosids</taxon>
        <taxon>malvids</taxon>
        <taxon>Brassicales</taxon>
        <taxon>Brassicaceae</taxon>
        <taxon>Camelineae</taxon>
        <taxon>Arabidopsis</taxon>
    </lineage>
</organism>
<dbReference type="EC" id="1.7.7.1"/>
<dbReference type="EMBL" id="D14824">
    <property type="protein sequence ID" value="BAA03561.1"/>
    <property type="molecule type" value="Genomic_DNA"/>
</dbReference>
<dbReference type="EMBL" id="AB006032">
    <property type="protein sequence ID" value="BAA21672.1"/>
    <property type="molecule type" value="mRNA"/>
</dbReference>
<dbReference type="EMBL" id="AC006248">
    <property type="protein sequence ID" value="AAD17406.1"/>
    <property type="molecule type" value="Genomic_DNA"/>
</dbReference>
<dbReference type="EMBL" id="CP002685">
    <property type="protein sequence ID" value="AEC06424.1"/>
    <property type="molecule type" value="Genomic_DNA"/>
</dbReference>
<dbReference type="EMBL" id="AF360320">
    <property type="protein sequence ID" value="AAK26030.1"/>
    <property type="molecule type" value="mRNA"/>
</dbReference>
<dbReference type="EMBL" id="AY045608">
    <property type="protein sequence ID" value="AAK73966.1"/>
    <property type="molecule type" value="mRNA"/>
</dbReference>
<dbReference type="EMBL" id="AY093995">
    <property type="protein sequence ID" value="AAM16256.1"/>
    <property type="molecule type" value="mRNA"/>
</dbReference>
<dbReference type="EMBL" id="AY142685">
    <property type="protein sequence ID" value="AAN13223.1"/>
    <property type="molecule type" value="mRNA"/>
</dbReference>
<dbReference type="EMBL" id="BT000685">
    <property type="protein sequence ID" value="AAN31830.1"/>
    <property type="molecule type" value="mRNA"/>
</dbReference>
<dbReference type="EMBL" id="BT000686">
    <property type="protein sequence ID" value="AAN31831.1"/>
    <property type="molecule type" value="mRNA"/>
</dbReference>
<dbReference type="PIR" id="C84531">
    <property type="entry name" value="C84531"/>
</dbReference>
<dbReference type="RefSeq" id="NP_179164.1">
    <property type="nucleotide sequence ID" value="NM_127123.3"/>
</dbReference>
<dbReference type="SMR" id="Q39161"/>
<dbReference type="BioGRID" id="1414">
    <property type="interactions" value="6"/>
</dbReference>
<dbReference type="FunCoup" id="Q39161">
    <property type="interactions" value="50"/>
</dbReference>
<dbReference type="IntAct" id="Q39161">
    <property type="interactions" value="2"/>
</dbReference>
<dbReference type="STRING" id="3702.Q39161"/>
<dbReference type="iPTMnet" id="Q39161"/>
<dbReference type="MetOSite" id="Q39161"/>
<dbReference type="PaxDb" id="3702-AT2G15620.1"/>
<dbReference type="ProteomicsDB" id="236829"/>
<dbReference type="EnsemblPlants" id="AT2G15620.1">
    <property type="protein sequence ID" value="AT2G15620.1"/>
    <property type="gene ID" value="AT2G15620"/>
</dbReference>
<dbReference type="GeneID" id="816055"/>
<dbReference type="Gramene" id="AT2G15620.1">
    <property type="protein sequence ID" value="AT2G15620.1"/>
    <property type="gene ID" value="AT2G15620"/>
</dbReference>
<dbReference type="KEGG" id="ath:AT2G15620"/>
<dbReference type="Araport" id="AT2G15620"/>
<dbReference type="TAIR" id="AT2G15620">
    <property type="gene designation" value="NIR1"/>
</dbReference>
<dbReference type="eggNOG" id="KOG0560">
    <property type="taxonomic scope" value="Eukaryota"/>
</dbReference>
<dbReference type="HOGENOM" id="CLU_015667_2_2_1"/>
<dbReference type="InParanoid" id="Q39161"/>
<dbReference type="OMA" id="FFRPVTP"/>
<dbReference type="OrthoDB" id="432685at2759"/>
<dbReference type="PhylomeDB" id="Q39161"/>
<dbReference type="UniPathway" id="UPA00653"/>
<dbReference type="CD-CODE" id="4299E36E">
    <property type="entry name" value="Nucleolus"/>
</dbReference>
<dbReference type="PRO" id="PR:Q39161"/>
<dbReference type="Proteomes" id="UP000006548">
    <property type="component" value="Chromosome 2"/>
</dbReference>
<dbReference type="ExpressionAtlas" id="Q39161">
    <property type="expression patterns" value="baseline and differential"/>
</dbReference>
<dbReference type="GO" id="GO:0048046">
    <property type="term" value="C:apoplast"/>
    <property type="evidence" value="ECO:0007005"/>
    <property type="project" value="TAIR"/>
</dbReference>
<dbReference type="GO" id="GO:0009507">
    <property type="term" value="C:chloroplast"/>
    <property type="evidence" value="ECO:0007005"/>
    <property type="project" value="TAIR"/>
</dbReference>
<dbReference type="GO" id="GO:0009570">
    <property type="term" value="C:chloroplast stroma"/>
    <property type="evidence" value="ECO:0007005"/>
    <property type="project" value="TAIR"/>
</dbReference>
<dbReference type="GO" id="GO:0005739">
    <property type="term" value="C:mitochondrion"/>
    <property type="evidence" value="ECO:0007005"/>
    <property type="project" value="TAIR"/>
</dbReference>
<dbReference type="GO" id="GO:0051539">
    <property type="term" value="F:4 iron, 4 sulfur cluster binding"/>
    <property type="evidence" value="ECO:0007669"/>
    <property type="project" value="UniProtKB-KW"/>
</dbReference>
<dbReference type="GO" id="GO:0048307">
    <property type="term" value="F:ferredoxin-nitrite reductase activity"/>
    <property type="evidence" value="ECO:0007669"/>
    <property type="project" value="UniProtKB-EC"/>
</dbReference>
<dbReference type="GO" id="GO:0020037">
    <property type="term" value="F:heme binding"/>
    <property type="evidence" value="ECO:0007669"/>
    <property type="project" value="InterPro"/>
</dbReference>
<dbReference type="GO" id="GO:0046872">
    <property type="term" value="F:metal ion binding"/>
    <property type="evidence" value="ECO:0007669"/>
    <property type="project" value="UniProtKB-KW"/>
</dbReference>
<dbReference type="GO" id="GO:0050421">
    <property type="term" value="F:nitrite reductase (NO-forming) activity"/>
    <property type="evidence" value="ECO:0000250"/>
    <property type="project" value="TAIR"/>
</dbReference>
<dbReference type="GO" id="GO:0042128">
    <property type="term" value="P:nitrate assimilation"/>
    <property type="evidence" value="ECO:0007669"/>
    <property type="project" value="UniProtKB-UniPathway"/>
</dbReference>
<dbReference type="GO" id="GO:0010167">
    <property type="term" value="P:response to nitrate"/>
    <property type="evidence" value="ECO:0000270"/>
    <property type="project" value="TAIR"/>
</dbReference>
<dbReference type="FunFam" id="3.30.413.10:FF:000021">
    <property type="entry name" value="Nitrite reductase"/>
    <property type="match status" value="1"/>
</dbReference>
<dbReference type="Gene3D" id="3.90.480.20">
    <property type="match status" value="1"/>
</dbReference>
<dbReference type="Gene3D" id="3.30.413.10">
    <property type="entry name" value="Sulfite Reductase Hemoprotein, domain 1"/>
    <property type="match status" value="2"/>
</dbReference>
<dbReference type="InterPro" id="IPR051329">
    <property type="entry name" value="NIR_SIR_4Fe-4S"/>
</dbReference>
<dbReference type="InterPro" id="IPR005117">
    <property type="entry name" value="NiRdtase/SiRdtase_haem-b_fer"/>
</dbReference>
<dbReference type="InterPro" id="IPR036136">
    <property type="entry name" value="Nit/Sulf_reduc_fer-like_dom_sf"/>
</dbReference>
<dbReference type="InterPro" id="IPR006067">
    <property type="entry name" value="NO2/SO3_Rdtase_4Fe4S_dom"/>
</dbReference>
<dbReference type="InterPro" id="IPR045854">
    <property type="entry name" value="NO2/SO3_Rdtase_4Fe4S_sf"/>
</dbReference>
<dbReference type="InterPro" id="IPR006066">
    <property type="entry name" value="NO2/SO3_Rdtase_FeS/sirohaem_BS"/>
</dbReference>
<dbReference type="NCBIfam" id="NF007125">
    <property type="entry name" value="PRK09566.1"/>
    <property type="match status" value="1"/>
</dbReference>
<dbReference type="PANTHER" id="PTHR32439">
    <property type="entry name" value="FERREDOXIN--NITRITE REDUCTASE, CHLOROPLASTIC"/>
    <property type="match status" value="1"/>
</dbReference>
<dbReference type="PANTHER" id="PTHR32439:SF0">
    <property type="entry name" value="FERREDOXIN--NITRITE REDUCTASE, CHLOROPLASTIC"/>
    <property type="match status" value="1"/>
</dbReference>
<dbReference type="Pfam" id="PF01077">
    <property type="entry name" value="NIR_SIR"/>
    <property type="match status" value="2"/>
</dbReference>
<dbReference type="Pfam" id="PF03460">
    <property type="entry name" value="NIR_SIR_ferr"/>
    <property type="match status" value="2"/>
</dbReference>
<dbReference type="PRINTS" id="PR00397">
    <property type="entry name" value="SIROHAEM"/>
</dbReference>
<dbReference type="SUPFAM" id="SSF56014">
    <property type="entry name" value="Nitrite and sulphite reductase 4Fe-4S domain-like"/>
    <property type="match status" value="2"/>
</dbReference>
<dbReference type="SUPFAM" id="SSF55124">
    <property type="entry name" value="Nitrite/Sulfite reductase N-terminal domain-like"/>
    <property type="match status" value="2"/>
</dbReference>
<dbReference type="PROSITE" id="PS00365">
    <property type="entry name" value="NIR_SIR"/>
    <property type="match status" value="1"/>
</dbReference>
<reference key="1">
    <citation type="journal article" date="1994" name="DNA Seq.">
        <title>Nucleotide sequence of a gene for nitrite reductase from Arabidopsis thaliana.</title>
        <authorList>
            <person name="Tanaka T."/>
            <person name="Ida S."/>
            <person name="Irifune K."/>
            <person name="Oeda K."/>
            <person name="Morikawa H."/>
        </authorList>
    </citation>
    <scope>NUCLEOTIDE SEQUENCE [GENOMIC DNA]</scope>
    <source>
        <strain>cv. Columbia</strain>
    </source>
</reference>
<reference key="2">
    <citation type="submission" date="1997-07" db="EMBL/GenBank/DDBJ databases">
        <authorList>
            <person name="Hara K."/>
            <person name="Komaba S."/>
            <person name="Takahashi M."/>
            <person name="Goshima N."/>
            <person name="Morikawa H."/>
        </authorList>
    </citation>
    <scope>NUCLEOTIDE SEQUENCE [MRNA]</scope>
    <source>
        <strain>cv. C24</strain>
        <tissue>Leaf</tissue>
    </source>
</reference>
<reference key="3">
    <citation type="journal article" date="1999" name="Nature">
        <title>Sequence and analysis of chromosome 2 of the plant Arabidopsis thaliana.</title>
        <authorList>
            <person name="Lin X."/>
            <person name="Kaul S."/>
            <person name="Rounsley S.D."/>
            <person name="Shea T.P."/>
            <person name="Benito M.-I."/>
            <person name="Town C.D."/>
            <person name="Fujii C.Y."/>
            <person name="Mason T.M."/>
            <person name="Bowman C.L."/>
            <person name="Barnstead M.E."/>
            <person name="Feldblyum T.V."/>
            <person name="Buell C.R."/>
            <person name="Ketchum K.A."/>
            <person name="Lee J.J."/>
            <person name="Ronning C.M."/>
            <person name="Koo H.L."/>
            <person name="Moffat K.S."/>
            <person name="Cronin L.A."/>
            <person name="Shen M."/>
            <person name="Pai G."/>
            <person name="Van Aken S."/>
            <person name="Umayam L."/>
            <person name="Tallon L.J."/>
            <person name="Gill J.E."/>
            <person name="Adams M.D."/>
            <person name="Carrera A.J."/>
            <person name="Creasy T.H."/>
            <person name="Goodman H.M."/>
            <person name="Somerville C.R."/>
            <person name="Copenhaver G.P."/>
            <person name="Preuss D."/>
            <person name="Nierman W.C."/>
            <person name="White O."/>
            <person name="Eisen J.A."/>
            <person name="Salzberg S.L."/>
            <person name="Fraser C.M."/>
            <person name="Venter J.C."/>
        </authorList>
    </citation>
    <scope>NUCLEOTIDE SEQUENCE [LARGE SCALE GENOMIC DNA]</scope>
    <source>
        <strain>cv. Columbia</strain>
    </source>
</reference>
<reference key="4">
    <citation type="journal article" date="2017" name="Plant J.">
        <title>Araport11: a complete reannotation of the Arabidopsis thaliana reference genome.</title>
        <authorList>
            <person name="Cheng C.Y."/>
            <person name="Krishnakumar V."/>
            <person name="Chan A.P."/>
            <person name="Thibaud-Nissen F."/>
            <person name="Schobel S."/>
            <person name="Town C.D."/>
        </authorList>
    </citation>
    <scope>GENOME REANNOTATION</scope>
    <source>
        <strain>cv. Columbia</strain>
    </source>
</reference>
<reference key="5">
    <citation type="journal article" date="2003" name="Science">
        <title>Empirical analysis of transcriptional activity in the Arabidopsis genome.</title>
        <authorList>
            <person name="Yamada K."/>
            <person name="Lim J."/>
            <person name="Dale J.M."/>
            <person name="Chen H."/>
            <person name="Shinn P."/>
            <person name="Palm C.J."/>
            <person name="Southwick A.M."/>
            <person name="Wu H.C."/>
            <person name="Kim C.J."/>
            <person name="Nguyen M."/>
            <person name="Pham P.K."/>
            <person name="Cheuk R.F."/>
            <person name="Karlin-Newmann G."/>
            <person name="Liu S.X."/>
            <person name="Lam B."/>
            <person name="Sakano H."/>
            <person name="Wu T."/>
            <person name="Yu G."/>
            <person name="Miranda M."/>
            <person name="Quach H.L."/>
            <person name="Tripp M."/>
            <person name="Chang C.H."/>
            <person name="Lee J.M."/>
            <person name="Toriumi M.J."/>
            <person name="Chan M.M."/>
            <person name="Tang C.C."/>
            <person name="Onodera C.S."/>
            <person name="Deng J.M."/>
            <person name="Akiyama K."/>
            <person name="Ansari Y."/>
            <person name="Arakawa T."/>
            <person name="Banh J."/>
            <person name="Banno F."/>
            <person name="Bowser L."/>
            <person name="Brooks S.Y."/>
            <person name="Carninci P."/>
            <person name="Chao Q."/>
            <person name="Choy N."/>
            <person name="Enju A."/>
            <person name="Goldsmith A.D."/>
            <person name="Gurjal M."/>
            <person name="Hansen N.F."/>
            <person name="Hayashizaki Y."/>
            <person name="Johnson-Hopson C."/>
            <person name="Hsuan V.W."/>
            <person name="Iida K."/>
            <person name="Karnes M."/>
            <person name="Khan S."/>
            <person name="Koesema E."/>
            <person name="Ishida J."/>
            <person name="Jiang P.X."/>
            <person name="Jones T."/>
            <person name="Kawai J."/>
            <person name="Kamiya A."/>
            <person name="Meyers C."/>
            <person name="Nakajima M."/>
            <person name="Narusaka M."/>
            <person name="Seki M."/>
            <person name="Sakurai T."/>
            <person name="Satou M."/>
            <person name="Tamse R."/>
            <person name="Vaysberg M."/>
            <person name="Wallender E.K."/>
            <person name="Wong C."/>
            <person name="Yamamura Y."/>
            <person name="Yuan S."/>
            <person name="Shinozaki K."/>
            <person name="Davis R.W."/>
            <person name="Theologis A."/>
            <person name="Ecker J.R."/>
        </authorList>
    </citation>
    <scope>NUCLEOTIDE SEQUENCE [LARGE SCALE MRNA]</scope>
    <source>
        <strain>cv. Columbia</strain>
    </source>
</reference>
<reference key="6">
    <citation type="journal article" date="1997" name="Plant J.">
        <title>Nitrite reductase expression is regulated at the post-transcriptional level by the nitrogen source in Nicotiana plumbaginifolia and Arabidopsis thaliana.</title>
        <authorList>
            <person name="Crete P."/>
            <person name="Caboche M."/>
            <person name="Meyer C."/>
        </authorList>
    </citation>
    <scope>CHARACTERIZATION</scope>
    <scope>INDUCTION</scope>
</reference>
<reference key="7">
    <citation type="journal article" date="2001" name="Plant Physiol.">
        <title>Nitrite reductase gene enrichment improves assimilation of NO(2) in Arabidopsis.</title>
        <authorList>
            <person name="Takahashi M."/>
            <person name="Sasaki Y."/>
            <person name="Ida S."/>
            <person name="Morikawa H."/>
        </authorList>
    </citation>
    <scope>FUNCTION</scope>
    <scope>SUBCELLULAR LOCATION</scope>
</reference>
<reference key="8">
    <citation type="journal article" date="2007" name="Mol. Cell. Proteomics">
        <title>Multidimensional protein identification technology (MudPIT) analysis of ubiquitinated proteins in plants.</title>
        <authorList>
            <person name="Maor R."/>
            <person name="Jones A."/>
            <person name="Nuehse T.S."/>
            <person name="Studholme D.J."/>
            <person name="Peck S.C."/>
            <person name="Shirasu K."/>
        </authorList>
    </citation>
    <scope>UBIQUITINATION [LARGE SCALE ANALYSIS] AT LYS-103</scope>
    <scope>IDENTIFICATION BY MASS SPECTROMETRY [LARGE SCALE ANALYSIS]</scope>
    <source>
        <strain>cv. Landsberg erecta</strain>
    </source>
</reference>
<sequence>MTSFSLTFTSPLLPSSSTKPKRSVLVAAAQTTAPAESTASVDADRLEPRVELKDGFFILKEKFRKGINPQEKVKIEREPMKLFMENGIEELAKKSMEELDSEKSSKDDIDVRLKWLGLFHRRKHQYGKFMMRLKLPNGVTTSAQTRYLASVIRKYGEDGCADVTTRQNWQIRGVVLPDVPEILKGLASVGLTSLQSGMDNVRNPVGNPIAGIDPEEIVDTRPYTNLLSQFITANSQGNPDFTNLPRKWNVCVVGTHDLYEHPHINDLAYMPANKDGRFGFNLLVGGFFSPKRCEEAIPLDAWVPADDVLPLCKAVLEAYRDLGTRGNRQKTRMMWLIDELGVEGFRTEVEKRMPNGKLERGSSEDLVNKQWERRDYFGVNPQKQEGLSFVGLHVPVGRLQADDMDELARLADTYGSGELRLTVEQNIIIPNVETSKTEALLQEPFLKNRFSPEPSILMKGLVACTGSQFCGQAIIETKLRALKVTEEVERLVSVPRPIRMHWTGCPNTCGQVQVADIGFMGCLTRGEEGKPVEGADVYVGGRIGSDSHIGEIYKKGVRVTELVPLVAEILIKEFGAVPREREENED</sequence>
<evidence type="ECO:0000250" key="1"/>
<evidence type="ECO:0000255" key="2"/>
<evidence type="ECO:0000256" key="3">
    <source>
        <dbReference type="SAM" id="MobiDB-lite"/>
    </source>
</evidence>
<evidence type="ECO:0000269" key="4">
    <source>
    </source>
</evidence>
<evidence type="ECO:0000269" key="5">
    <source>
    </source>
</evidence>
<evidence type="ECO:0000305" key="6"/>
<evidence type="ECO:0007744" key="7">
    <source>
    </source>
</evidence>
<keyword id="KW-0004">4Fe-4S</keyword>
<keyword id="KW-0150">Chloroplast</keyword>
<keyword id="KW-0249">Electron transport</keyword>
<keyword id="KW-0349">Heme</keyword>
<keyword id="KW-0408">Iron</keyword>
<keyword id="KW-0411">Iron-sulfur</keyword>
<keyword id="KW-1017">Isopeptide bond</keyword>
<keyword id="KW-0479">Metal-binding</keyword>
<keyword id="KW-0534">Nitrate assimilation</keyword>
<keyword id="KW-0560">Oxidoreductase</keyword>
<keyword id="KW-0934">Plastid</keyword>
<keyword id="KW-1185">Reference proteome</keyword>
<keyword id="KW-0677">Repeat</keyword>
<keyword id="KW-0809">Transit peptide</keyword>
<keyword id="KW-0813">Transport</keyword>
<keyword id="KW-0832">Ubl conjugation</keyword>
<accession>Q39161</accession>
<accession>Q8H163</accession>
<accession>Q8H164</accession>
<gene>
    <name type="primary">NIR1</name>
    <name type="synonym">NIR</name>
    <name type="ordered locus">At2g15620</name>
    <name type="ORF">F9O13.17</name>
</gene>
<feature type="transit peptide" description="Chloroplast" evidence="2">
    <location>
        <begin position="1"/>
        <end position="25"/>
    </location>
</feature>
<feature type="chain" id="PRO_0000019703" description="Ferredoxin--nitrite reductase, chloroplastic">
    <location>
        <begin position="26"/>
        <end position="586"/>
    </location>
</feature>
<feature type="region of interest" description="Disordered" evidence="3">
    <location>
        <begin position="1"/>
        <end position="20"/>
    </location>
</feature>
<feature type="compositionally biased region" description="Low complexity" evidence="3">
    <location>
        <begin position="1"/>
        <end position="18"/>
    </location>
</feature>
<feature type="binding site" evidence="1">
    <location>
        <position position="464"/>
    </location>
    <ligand>
        <name>[4Fe-4S] cluster</name>
        <dbReference type="ChEBI" id="CHEBI:49883"/>
    </ligand>
</feature>
<feature type="binding site" evidence="1">
    <location>
        <position position="470"/>
    </location>
    <ligand>
        <name>[4Fe-4S] cluster</name>
        <dbReference type="ChEBI" id="CHEBI:49883"/>
    </ligand>
</feature>
<feature type="binding site" evidence="1">
    <location>
        <position position="505"/>
    </location>
    <ligand>
        <name>[4Fe-4S] cluster</name>
        <dbReference type="ChEBI" id="CHEBI:49883"/>
    </ligand>
</feature>
<feature type="binding site" evidence="1">
    <location>
        <position position="509"/>
    </location>
    <ligand>
        <name>[4Fe-4S] cluster</name>
        <dbReference type="ChEBI" id="CHEBI:49883"/>
    </ligand>
</feature>
<feature type="binding site" description="axial binding residue" evidence="1">
    <location>
        <position position="509"/>
    </location>
    <ligand>
        <name>siroheme</name>
        <dbReference type="ChEBI" id="CHEBI:60052"/>
    </ligand>
    <ligandPart>
        <name>Fe</name>
        <dbReference type="ChEBI" id="CHEBI:18248"/>
    </ligandPart>
</feature>
<feature type="cross-link" description="Glycyl lysine isopeptide (Lys-Gly) (interchain with G-Cter in ubiquitin)" evidence="7">
    <location>
        <position position="103"/>
    </location>
</feature>
<feature type="sequence conflict" description="In Ref. 5; AAN31831." evidence="6" ref="5">
    <original>R</original>
    <variation>G</variation>
    <location>
        <position position="77"/>
    </location>
</feature>
<feature type="sequence conflict" description="In Ref. 5; AAN31830." evidence="6" ref="5">
    <original>P</original>
    <variation>Q</variation>
    <location>
        <position position="214"/>
    </location>
</feature>
<protein>
    <recommendedName>
        <fullName>Ferredoxin--nitrite reductase, chloroplastic</fullName>
        <shortName>NiR</shortName>
        <ecNumber>1.7.7.1</ecNumber>
    </recommendedName>
</protein>
<comment type="function">
    <text evidence="4">Catalyzes the six-electron reduction of nitrite to ammonium.</text>
</comment>
<comment type="catalytic activity">
    <reaction>
        <text>6 oxidized [2Fe-2S]-[ferredoxin] + NH4(+) + 2 H2O = nitrite + 6 reduced [2Fe-2S]-[ferredoxin] + 8 H(+)</text>
        <dbReference type="Rhea" id="RHEA:18041"/>
        <dbReference type="Rhea" id="RHEA-COMP:10000"/>
        <dbReference type="Rhea" id="RHEA-COMP:10001"/>
        <dbReference type="ChEBI" id="CHEBI:15377"/>
        <dbReference type="ChEBI" id="CHEBI:15378"/>
        <dbReference type="ChEBI" id="CHEBI:16301"/>
        <dbReference type="ChEBI" id="CHEBI:28938"/>
        <dbReference type="ChEBI" id="CHEBI:33737"/>
        <dbReference type="ChEBI" id="CHEBI:33738"/>
        <dbReference type="EC" id="1.7.7.1"/>
    </reaction>
</comment>
<comment type="cofactor">
    <cofactor>
        <name>siroheme</name>
        <dbReference type="ChEBI" id="CHEBI:60052"/>
    </cofactor>
    <text>Binds 1 siroheme per subunit.</text>
</comment>
<comment type="cofactor">
    <cofactor>
        <name>[4Fe-4S] cluster</name>
        <dbReference type="ChEBI" id="CHEBI:49883"/>
    </cofactor>
    <text>Binds 1 [4Fe-4S] cluster per subunit.</text>
</comment>
<comment type="pathway">
    <text>Nitrogen metabolism; nitrate reduction (assimilation).</text>
</comment>
<comment type="subunit">
    <text>Monomer.</text>
</comment>
<comment type="subcellular location">
    <subcellularLocation>
        <location evidence="4">Plastid</location>
        <location evidence="4">Chloroplast</location>
    </subcellularLocation>
</comment>
<comment type="induction">
    <text evidence="5">By nitrate and by light.</text>
</comment>
<comment type="similarity">
    <text evidence="6">Belongs to the nitrite and sulfite reductase 4Fe-4S domain family.</text>
</comment>
<name>NIR_ARATH</name>
<proteinExistence type="evidence at protein level"/>